<comment type="function">
    <text evidence="1">Trans-acting factor that binds specifically to the consensus nucleotide sequence 5'-TNCGTACAA-3'.</text>
</comment>
<comment type="cofactor">
    <cofactor evidence="1">
        <name>Zn(2+)</name>
        <dbReference type="ChEBI" id="CHEBI:29105"/>
    </cofactor>
    <text evidence="1">Binds 2 Zn(2+) ions per subunit.</text>
</comment>
<comment type="interaction">
    <interactant intactId="EBI-15206662">
        <id>B9DI20</id>
    </interactant>
    <interactant intactId="EBI-963606">
        <id>Q9LQT8</id>
        <label>GAI</label>
    </interactant>
    <organismsDiffer>false</organismsDiffer>
    <experiments>3</experiments>
</comment>
<comment type="interaction">
    <interactant intactId="EBI-15206662">
        <id>B9DI20</id>
    </interactant>
    <interactant intactId="EBI-963665">
        <id>Q8GXW1</id>
        <label>RGL2</label>
    </interactant>
    <organismsDiffer>false</organismsDiffer>
    <experiments>3</experiments>
</comment>
<comment type="subcellular location">
    <subcellularLocation>
        <location evidence="6">Nucleus</location>
    </subcellularLocation>
</comment>
<comment type="developmental stage">
    <text evidence="5">Weak increase of expression during floral induction.</text>
</comment>
<comment type="induction">
    <text evidence="7">Negatively regulated by microRNAs miR156 and miR157.</text>
</comment>
<comment type="domain">
    <text>The SBP-type zinc finger is required for the binding to DNA.</text>
</comment>
<comment type="sequence caution" evidence="6">
    <conflict type="erroneous initiation">
        <sequence resource="EMBL-CDS" id="AAM61173"/>
    </conflict>
    <text>Truncated N-terminus.</text>
</comment>
<name>SP13A_ARATH</name>
<reference key="1">
    <citation type="submission" date="1999-04" db="EMBL/GenBank/DDBJ databases">
        <title>Structural analysis of Arabidopsis thaliana chromosome 5. XI.</title>
        <authorList>
            <person name="Kaneko T."/>
            <person name="Katoh T."/>
            <person name="Asamizu E."/>
            <person name="Sato S."/>
            <person name="Nakamura Y."/>
            <person name="Kotani H."/>
            <person name="Tabata S."/>
        </authorList>
    </citation>
    <scope>NUCLEOTIDE SEQUENCE [LARGE SCALE GENOMIC DNA]</scope>
    <source>
        <strain>cv. Columbia</strain>
    </source>
</reference>
<reference key="2">
    <citation type="journal article" date="2017" name="Plant J.">
        <title>Araport11: a complete reannotation of the Arabidopsis thaliana reference genome.</title>
        <authorList>
            <person name="Cheng C.Y."/>
            <person name="Krishnakumar V."/>
            <person name="Chan A.P."/>
            <person name="Thibaud-Nissen F."/>
            <person name="Schobel S."/>
            <person name="Town C.D."/>
        </authorList>
    </citation>
    <scope>GENOME REANNOTATION</scope>
    <source>
        <strain>cv. Columbia</strain>
    </source>
</reference>
<reference key="3">
    <citation type="journal article" date="2002" name="Science">
        <title>Functional annotation of a full-length Arabidopsis cDNA collection.</title>
        <authorList>
            <person name="Seki M."/>
            <person name="Narusaka M."/>
            <person name="Kamiya A."/>
            <person name="Ishida J."/>
            <person name="Satou M."/>
            <person name="Sakurai T."/>
            <person name="Nakajima M."/>
            <person name="Enju A."/>
            <person name="Akiyama K."/>
            <person name="Oono Y."/>
            <person name="Muramatsu M."/>
            <person name="Hayashizaki Y."/>
            <person name="Kawai J."/>
            <person name="Carninci P."/>
            <person name="Itoh M."/>
            <person name="Ishii Y."/>
            <person name="Arakawa T."/>
            <person name="Shibata K."/>
            <person name="Shinagawa A."/>
            <person name="Shinozaki K."/>
        </authorList>
    </citation>
    <scope>NUCLEOTIDE SEQUENCE [LARGE SCALE MRNA]</scope>
    <source>
        <strain>cv. Columbia</strain>
    </source>
</reference>
<reference key="4">
    <citation type="journal article" date="2009" name="DNA Res.">
        <title>Analysis of multiple occurrences of alternative splicing events in Arabidopsis thaliana using novel sequenced full-length cDNAs.</title>
        <authorList>
            <person name="Iida K."/>
            <person name="Fukami-Kobayashi K."/>
            <person name="Toyoda A."/>
            <person name="Sakaki Y."/>
            <person name="Kobayashi M."/>
            <person name="Seki M."/>
            <person name="Shinozaki K."/>
        </authorList>
    </citation>
    <scope>NUCLEOTIDE SEQUENCE [LARGE SCALE MRNA]</scope>
    <source>
        <strain>cv. Columbia</strain>
        <tissue>Rosette leaf</tissue>
    </source>
</reference>
<reference key="5">
    <citation type="submission" date="2002-03" db="EMBL/GenBank/DDBJ databases">
        <title>Full-length cDNA from Arabidopsis thaliana.</title>
        <authorList>
            <person name="Brover V.V."/>
            <person name="Troukhan M.E."/>
            <person name="Alexandrov N.A."/>
            <person name="Lu Y.-P."/>
            <person name="Flavell R.B."/>
            <person name="Feldmann K.A."/>
        </authorList>
    </citation>
    <scope>NUCLEOTIDE SEQUENCE [LARGE SCALE MRNA]</scope>
</reference>
<reference key="6">
    <citation type="journal article" date="2002" name="Cell">
        <title>Prediction of plant microRNA targets.</title>
        <authorList>
            <person name="Rhoades M.W."/>
            <person name="Reinhart B.J."/>
            <person name="Lim L.P."/>
            <person name="Burge C.B."/>
            <person name="Bartel B."/>
            <person name="Bartel D.P."/>
        </authorList>
    </citation>
    <scope>INDUCTION</scope>
</reference>
<reference key="7">
    <citation type="journal article" date="2003" name="Development">
        <title>Dissection of floral induction pathways using global expression analysis.</title>
        <authorList>
            <person name="Schmid M."/>
            <person name="Uhlenhaut N.H."/>
            <person name="Godard F."/>
            <person name="Demar M."/>
            <person name="Bressan R."/>
            <person name="Weigel D."/>
            <person name="Lohmann J.U."/>
        </authorList>
    </citation>
    <scope>DEVELOPMENTAL STAGE</scope>
</reference>
<gene>
    <name type="primary">SPL13A</name>
    <name type="synonym">SPL13</name>
    <name type="ordered locus">At5g50570</name>
    <name type="ORF">MBA10.13</name>
</gene>
<proteinExistence type="evidence at protein level"/>
<evidence type="ECO:0000250" key="1"/>
<evidence type="ECO:0000255" key="2"/>
<evidence type="ECO:0000255" key="3">
    <source>
        <dbReference type="PROSITE-ProRule" id="PRU00470"/>
    </source>
</evidence>
<evidence type="ECO:0000256" key="4">
    <source>
        <dbReference type="SAM" id="MobiDB-lite"/>
    </source>
</evidence>
<evidence type="ECO:0000269" key="5">
    <source>
    </source>
</evidence>
<evidence type="ECO:0000305" key="6"/>
<evidence type="ECO:0000305" key="7">
    <source>
    </source>
</evidence>
<keyword id="KW-0002">3D-structure</keyword>
<keyword id="KW-0238">DNA-binding</keyword>
<keyword id="KW-0479">Metal-binding</keyword>
<keyword id="KW-0539">Nucleus</keyword>
<keyword id="KW-1185">Reference proteome</keyword>
<keyword id="KW-0804">Transcription</keyword>
<keyword id="KW-0805">Transcription regulation</keyword>
<keyword id="KW-0862">Zinc</keyword>
<keyword id="KW-0863">Zinc-finger</keyword>
<sequence length="359" mass="39108">MDWNFKLSSGYLSGFDQEPDLSPMDGSISFGGSSQSKADFSFDLKLGRNIGNSSSVFGDTEQVISLSKWKDSALAKPEGSRSSSSKRTRGNGVGTNQMPICLVDGCDSDFSNCREYHKRHKVCDVHSKTPVVTINGHKQRFCQQCSRFHALEEFDEGKRSCRKRLDGHNRRRRKPQPEHIGRPANFFTGFQGSKLLEFSGGSHVFPTTSVLNPSWGNSLVSVAVAANGSSYGQSQSYVVGSSPAKTGIMFPISSSPNSTRSIAKQFPFLQEEESSRTASLCERMTSCIHDSDCALSLLSSSSSSVPHLLQPPLSLSQEAVETVFYGSGLFENASAVSDGSVISGNEAVRLPQTFPFHWE</sequence>
<accession>B9DI20</accession>
<accession>Q8LFW6</accession>
<accession>Q9LUF4</accession>
<organism>
    <name type="scientific">Arabidopsis thaliana</name>
    <name type="common">Mouse-ear cress</name>
    <dbReference type="NCBI Taxonomy" id="3702"/>
    <lineage>
        <taxon>Eukaryota</taxon>
        <taxon>Viridiplantae</taxon>
        <taxon>Streptophyta</taxon>
        <taxon>Embryophyta</taxon>
        <taxon>Tracheophyta</taxon>
        <taxon>Spermatophyta</taxon>
        <taxon>Magnoliopsida</taxon>
        <taxon>eudicotyledons</taxon>
        <taxon>Gunneridae</taxon>
        <taxon>Pentapetalae</taxon>
        <taxon>rosids</taxon>
        <taxon>malvids</taxon>
        <taxon>Brassicales</taxon>
        <taxon>Brassicaceae</taxon>
        <taxon>Camelineae</taxon>
        <taxon>Arabidopsis</taxon>
    </lineage>
</organism>
<protein>
    <recommendedName>
        <fullName>Squamosa promoter-binding-like protein 13A</fullName>
    </recommendedName>
</protein>
<feature type="chain" id="PRO_0000132734" description="Squamosa promoter-binding-like protein 13A">
    <location>
        <begin position="1"/>
        <end position="359"/>
    </location>
</feature>
<feature type="zinc finger region" description="SBP-type" evidence="3">
    <location>
        <begin position="98"/>
        <end position="175"/>
    </location>
</feature>
<feature type="region of interest" description="Disordered" evidence="4">
    <location>
        <begin position="75"/>
        <end position="94"/>
    </location>
</feature>
<feature type="short sequence motif" description="Bipartite nuclear localization signal" evidence="2">
    <location>
        <begin position="158"/>
        <end position="174"/>
    </location>
</feature>
<feature type="binding site" evidence="3">
    <location>
        <position position="101"/>
    </location>
    <ligand>
        <name>Zn(2+)</name>
        <dbReference type="ChEBI" id="CHEBI:29105"/>
        <label>1</label>
    </ligand>
</feature>
<feature type="binding site" evidence="3">
    <location>
        <position position="106"/>
    </location>
    <ligand>
        <name>Zn(2+)</name>
        <dbReference type="ChEBI" id="CHEBI:29105"/>
        <label>1</label>
    </ligand>
</feature>
<feature type="binding site" evidence="3">
    <location>
        <position position="123"/>
    </location>
    <ligand>
        <name>Zn(2+)</name>
        <dbReference type="ChEBI" id="CHEBI:29105"/>
        <label>1</label>
    </ligand>
</feature>
<feature type="binding site" evidence="3">
    <location>
        <position position="126"/>
    </location>
    <ligand>
        <name>Zn(2+)</name>
        <dbReference type="ChEBI" id="CHEBI:29105"/>
        <label>1</label>
    </ligand>
</feature>
<feature type="binding site" evidence="3">
    <location>
        <position position="142"/>
    </location>
    <ligand>
        <name>Zn(2+)</name>
        <dbReference type="ChEBI" id="CHEBI:29105"/>
        <label>2</label>
    </ligand>
</feature>
<feature type="binding site" evidence="3">
    <location>
        <position position="145"/>
    </location>
    <ligand>
        <name>Zn(2+)</name>
        <dbReference type="ChEBI" id="CHEBI:29105"/>
        <label>2</label>
    </ligand>
</feature>
<feature type="binding site" evidence="3">
    <location>
        <position position="149"/>
    </location>
    <ligand>
        <name>Zn(2+)</name>
        <dbReference type="ChEBI" id="CHEBI:29105"/>
        <label>2</label>
    </ligand>
</feature>
<feature type="binding site" evidence="3">
    <location>
        <position position="161"/>
    </location>
    <ligand>
        <name>Zn(2+)</name>
        <dbReference type="ChEBI" id="CHEBI:29105"/>
        <label>2</label>
    </ligand>
</feature>
<feature type="sequence conflict" description="In Ref. 5; AAM61173." evidence="6" ref="5">
    <original>S</original>
    <variation>C</variation>
    <location>
        <position position="334"/>
    </location>
</feature>
<dbReference type="EMBL" id="AB025619">
    <property type="protein sequence ID" value="BAB09142.1"/>
    <property type="molecule type" value="Genomic_DNA"/>
</dbReference>
<dbReference type="EMBL" id="CP002688">
    <property type="protein sequence ID" value="AED95962.1"/>
    <property type="molecule type" value="Genomic_DNA"/>
</dbReference>
<dbReference type="EMBL" id="CP002688">
    <property type="protein sequence ID" value="AED95963.1"/>
    <property type="molecule type" value="Genomic_DNA"/>
</dbReference>
<dbReference type="EMBL" id="AK117475">
    <property type="protein sequence ID" value="BAC42139.1"/>
    <property type="molecule type" value="mRNA"/>
</dbReference>
<dbReference type="EMBL" id="AK317730">
    <property type="protein sequence ID" value="BAH20387.1"/>
    <property type="molecule type" value="mRNA"/>
</dbReference>
<dbReference type="EMBL" id="AY084609">
    <property type="protein sequence ID" value="AAM61173.1"/>
    <property type="status" value="ALT_INIT"/>
    <property type="molecule type" value="mRNA"/>
</dbReference>
<dbReference type="RefSeq" id="NP_001332253.1">
    <property type="nucleotide sequence ID" value="NM_001344905.1"/>
</dbReference>
<dbReference type="RefSeq" id="NP_568731.1">
    <property type="nucleotide sequence ID" value="NM_124435.3"/>
</dbReference>
<dbReference type="RefSeq" id="NP_568740.1">
    <property type="nucleotide sequence ID" value="NM_124445.4"/>
</dbReference>
<dbReference type="RefSeq" id="NP_851161.1">
    <property type="nucleotide sequence ID" value="NM_180830.4"/>
</dbReference>
<dbReference type="PDB" id="8J4B">
    <property type="method" value="X-ray"/>
    <property type="resolution" value="2.00 A"/>
    <property type="chains" value="B/D=98-162"/>
</dbReference>
<dbReference type="PDBsum" id="8J4B"/>
<dbReference type="SMR" id="B9DI20"/>
<dbReference type="BioGRID" id="20372">
    <property type="interactions" value="1"/>
</dbReference>
<dbReference type="BioGRID" id="20384">
    <property type="interactions" value="18"/>
</dbReference>
<dbReference type="IntAct" id="B9DI20">
    <property type="interactions" value="23"/>
</dbReference>
<dbReference type="STRING" id="3702.B9DI20"/>
<dbReference type="GlyGen" id="B9DI20">
    <property type="glycosylation" value="1 site, 1 O-linked glycan (1 site)"/>
</dbReference>
<dbReference type="PaxDb" id="3702-AT5G50570.1"/>
<dbReference type="EnsemblPlants" id="AT5G50570.1">
    <property type="protein sequence ID" value="AT5G50570.1"/>
    <property type="gene ID" value="AT5G50570"/>
</dbReference>
<dbReference type="EnsemblPlants" id="AT5G50570.2">
    <property type="protein sequence ID" value="AT5G50570.2"/>
    <property type="gene ID" value="AT5G50570"/>
</dbReference>
<dbReference type="EnsemblPlants" id="AT5G50670.1">
    <property type="protein sequence ID" value="AT5G50670.1"/>
    <property type="gene ID" value="AT5G50670"/>
</dbReference>
<dbReference type="EnsemblPlants" id="AT5G50670.2">
    <property type="protein sequence ID" value="AT5G50670.2"/>
    <property type="gene ID" value="AT5G50670"/>
</dbReference>
<dbReference type="GeneID" id="835126"/>
<dbReference type="GeneID" id="835138"/>
<dbReference type="Gramene" id="AT5G50570.1">
    <property type="protein sequence ID" value="AT5G50570.1"/>
    <property type="gene ID" value="AT5G50570"/>
</dbReference>
<dbReference type="Gramene" id="AT5G50570.2">
    <property type="protein sequence ID" value="AT5G50570.2"/>
    <property type="gene ID" value="AT5G50570"/>
</dbReference>
<dbReference type="Gramene" id="AT5G50670.1">
    <property type="protein sequence ID" value="AT5G50670.1"/>
    <property type="gene ID" value="AT5G50670"/>
</dbReference>
<dbReference type="Gramene" id="AT5G50670.2">
    <property type="protein sequence ID" value="AT5G50670.2"/>
    <property type="gene ID" value="AT5G50670"/>
</dbReference>
<dbReference type="KEGG" id="ath:AT5G50570"/>
<dbReference type="KEGG" id="ath:AT5G50670"/>
<dbReference type="Araport" id="AT5G50570"/>
<dbReference type="TAIR" id="AT5G50570">
    <property type="gene designation" value="SPL13A"/>
</dbReference>
<dbReference type="eggNOG" id="ENOG502QRGA">
    <property type="taxonomic scope" value="Eukaryota"/>
</dbReference>
<dbReference type="HOGENOM" id="CLU_042475_0_0_1"/>
<dbReference type="InParanoid" id="B9DI20"/>
<dbReference type="OMA" id="SKWKETT"/>
<dbReference type="OrthoDB" id="514967at2759"/>
<dbReference type="PhylomeDB" id="B9DI20"/>
<dbReference type="PRO" id="PR:B9DI20"/>
<dbReference type="Proteomes" id="UP000006548">
    <property type="component" value="Chromosome 5"/>
</dbReference>
<dbReference type="ExpressionAtlas" id="B9DI20">
    <property type="expression patterns" value="baseline"/>
</dbReference>
<dbReference type="GO" id="GO:0005634">
    <property type="term" value="C:nucleus"/>
    <property type="evidence" value="ECO:0007669"/>
    <property type="project" value="UniProtKB-SubCell"/>
</dbReference>
<dbReference type="GO" id="GO:0003677">
    <property type="term" value="F:DNA binding"/>
    <property type="evidence" value="ECO:0007669"/>
    <property type="project" value="UniProtKB-KW"/>
</dbReference>
<dbReference type="GO" id="GO:0003700">
    <property type="term" value="F:DNA-binding transcription factor activity"/>
    <property type="evidence" value="ECO:0000250"/>
    <property type="project" value="TAIR"/>
</dbReference>
<dbReference type="GO" id="GO:0008270">
    <property type="term" value="F:zinc ion binding"/>
    <property type="evidence" value="ECO:0007669"/>
    <property type="project" value="UniProtKB-KW"/>
</dbReference>
<dbReference type="GO" id="GO:0048653">
    <property type="term" value="P:anther development"/>
    <property type="evidence" value="ECO:0000315"/>
    <property type="project" value="TAIR"/>
</dbReference>
<dbReference type="GO" id="GO:0006355">
    <property type="term" value="P:regulation of DNA-templated transcription"/>
    <property type="evidence" value="ECO:0000304"/>
    <property type="project" value="TAIR"/>
</dbReference>
<dbReference type="FunFam" id="4.10.1100.10:FF:000001">
    <property type="entry name" value="Squamosa promoter-binding-like protein 14"/>
    <property type="match status" value="1"/>
</dbReference>
<dbReference type="Gene3D" id="4.10.1100.10">
    <property type="entry name" value="Transcription factor, SBP-box domain"/>
    <property type="match status" value="1"/>
</dbReference>
<dbReference type="InterPro" id="IPR044817">
    <property type="entry name" value="SBP-like"/>
</dbReference>
<dbReference type="InterPro" id="IPR004333">
    <property type="entry name" value="SBP_dom"/>
</dbReference>
<dbReference type="InterPro" id="IPR036893">
    <property type="entry name" value="SBP_sf"/>
</dbReference>
<dbReference type="PANTHER" id="PTHR31251:SF207">
    <property type="entry name" value="SQUAMOSA PROMOTER-BINDING-LIKE PROTEIN 13A-RELATED"/>
    <property type="match status" value="1"/>
</dbReference>
<dbReference type="PANTHER" id="PTHR31251">
    <property type="entry name" value="SQUAMOSA PROMOTER-BINDING-LIKE PROTEIN 4"/>
    <property type="match status" value="1"/>
</dbReference>
<dbReference type="Pfam" id="PF03110">
    <property type="entry name" value="SBP"/>
    <property type="match status" value="1"/>
</dbReference>
<dbReference type="SUPFAM" id="SSF103612">
    <property type="entry name" value="SBT domain"/>
    <property type="match status" value="1"/>
</dbReference>
<dbReference type="PROSITE" id="PS51141">
    <property type="entry name" value="ZF_SBP"/>
    <property type="match status" value="1"/>
</dbReference>